<sequence length="368" mass="41826">MWIKELELKHYRNYDHLLASFSSGLNVFIGNNAQGKTNFLEAIYFLSLTRSHRTRADKELIHFDHSTVSLTGKIQRISGTVDLEINLSDKGRVTKINALKQAKLSDYIGTMMVVLFAPEDLQLVKGAPSLRRKFIDIDLGQIKPVYLSELSHYNHVLKQRNSYLKSAQQIDAAFLAVLDEQLASYGARVMEHRIDFINALEKEANTHHQAISNGLESLSLSYQSSVVFDKKTNIYQQFLHQLEKNHQKDFFRKNTSVGPHRDDLAFYINGMNANFASQGQHRSLILSLKMAEVSLMKALTGDNPILLLDDVMSELDNTRQTKLLETVIKENVQTFITTTSLDHLSQLPEGIRIFHVTKGTVQIDSDIH</sequence>
<name>RECF_STRPZ</name>
<accession>B5XJC1</accession>
<proteinExistence type="inferred from homology"/>
<organism>
    <name type="scientific">Streptococcus pyogenes serotype M49 (strain NZ131)</name>
    <dbReference type="NCBI Taxonomy" id="471876"/>
    <lineage>
        <taxon>Bacteria</taxon>
        <taxon>Bacillati</taxon>
        <taxon>Bacillota</taxon>
        <taxon>Bacilli</taxon>
        <taxon>Lactobacillales</taxon>
        <taxon>Streptococcaceae</taxon>
        <taxon>Streptococcus</taxon>
    </lineage>
</organism>
<protein>
    <recommendedName>
        <fullName evidence="1">DNA replication and repair protein RecF</fullName>
    </recommendedName>
</protein>
<evidence type="ECO:0000255" key="1">
    <source>
        <dbReference type="HAMAP-Rule" id="MF_00365"/>
    </source>
</evidence>
<keyword id="KW-0067">ATP-binding</keyword>
<keyword id="KW-0963">Cytoplasm</keyword>
<keyword id="KW-0227">DNA damage</keyword>
<keyword id="KW-0234">DNA repair</keyword>
<keyword id="KW-0235">DNA replication</keyword>
<keyword id="KW-0238">DNA-binding</keyword>
<keyword id="KW-0547">Nucleotide-binding</keyword>
<keyword id="KW-0742">SOS response</keyword>
<reference key="1">
    <citation type="journal article" date="2008" name="J. Bacteriol.">
        <title>Genome sequence of a nephritogenic and highly transformable M49 strain of Streptococcus pyogenes.</title>
        <authorList>
            <person name="McShan W.M."/>
            <person name="Ferretti J.J."/>
            <person name="Karasawa T."/>
            <person name="Suvorov A.N."/>
            <person name="Lin S."/>
            <person name="Qin B."/>
            <person name="Jia H."/>
            <person name="Kenton S."/>
            <person name="Najar F."/>
            <person name="Wu H."/>
            <person name="Scott J."/>
            <person name="Roe B.A."/>
            <person name="Savic D.J."/>
        </authorList>
    </citation>
    <scope>NUCLEOTIDE SEQUENCE [LARGE SCALE GENOMIC DNA]</scope>
    <source>
        <strain>NZ131</strain>
    </source>
</reference>
<comment type="function">
    <text evidence="1">The RecF protein is involved in DNA metabolism; it is required for DNA replication and normal SOS inducibility. RecF binds preferentially to single-stranded, linear DNA. It also seems to bind ATP.</text>
</comment>
<comment type="subcellular location">
    <subcellularLocation>
        <location evidence="1">Cytoplasm</location>
    </subcellularLocation>
</comment>
<comment type="similarity">
    <text evidence="1">Belongs to the RecF family.</text>
</comment>
<gene>
    <name evidence="1" type="primary">recF</name>
    <name type="ordered locus">Spy49_1810</name>
</gene>
<dbReference type="EMBL" id="CP000829">
    <property type="protein sequence ID" value="ACI62055.1"/>
    <property type="molecule type" value="Genomic_DNA"/>
</dbReference>
<dbReference type="SMR" id="B5XJC1"/>
<dbReference type="KEGG" id="soz:Spy49_1810"/>
<dbReference type="HOGENOM" id="CLU_040267_0_1_9"/>
<dbReference type="Proteomes" id="UP000001039">
    <property type="component" value="Chromosome"/>
</dbReference>
<dbReference type="GO" id="GO:0005737">
    <property type="term" value="C:cytoplasm"/>
    <property type="evidence" value="ECO:0007669"/>
    <property type="project" value="UniProtKB-SubCell"/>
</dbReference>
<dbReference type="GO" id="GO:0005524">
    <property type="term" value="F:ATP binding"/>
    <property type="evidence" value="ECO:0007669"/>
    <property type="project" value="UniProtKB-UniRule"/>
</dbReference>
<dbReference type="GO" id="GO:0003697">
    <property type="term" value="F:single-stranded DNA binding"/>
    <property type="evidence" value="ECO:0007669"/>
    <property type="project" value="UniProtKB-UniRule"/>
</dbReference>
<dbReference type="GO" id="GO:0006260">
    <property type="term" value="P:DNA replication"/>
    <property type="evidence" value="ECO:0007669"/>
    <property type="project" value="UniProtKB-UniRule"/>
</dbReference>
<dbReference type="GO" id="GO:0000731">
    <property type="term" value="P:DNA synthesis involved in DNA repair"/>
    <property type="evidence" value="ECO:0007669"/>
    <property type="project" value="TreeGrafter"/>
</dbReference>
<dbReference type="GO" id="GO:0006302">
    <property type="term" value="P:double-strand break repair"/>
    <property type="evidence" value="ECO:0007669"/>
    <property type="project" value="TreeGrafter"/>
</dbReference>
<dbReference type="GO" id="GO:0009432">
    <property type="term" value="P:SOS response"/>
    <property type="evidence" value="ECO:0007669"/>
    <property type="project" value="UniProtKB-UniRule"/>
</dbReference>
<dbReference type="CDD" id="cd03242">
    <property type="entry name" value="ABC_RecF"/>
    <property type="match status" value="1"/>
</dbReference>
<dbReference type="Gene3D" id="3.40.50.300">
    <property type="entry name" value="P-loop containing nucleotide triphosphate hydrolases"/>
    <property type="match status" value="1"/>
</dbReference>
<dbReference type="Gene3D" id="1.20.1050.90">
    <property type="entry name" value="RecF/RecN/SMC, N-terminal domain"/>
    <property type="match status" value="1"/>
</dbReference>
<dbReference type="HAMAP" id="MF_00365">
    <property type="entry name" value="RecF"/>
    <property type="match status" value="1"/>
</dbReference>
<dbReference type="InterPro" id="IPR001238">
    <property type="entry name" value="DNA-binding_RecF"/>
</dbReference>
<dbReference type="InterPro" id="IPR018078">
    <property type="entry name" value="DNA-binding_RecF_CS"/>
</dbReference>
<dbReference type="InterPro" id="IPR027417">
    <property type="entry name" value="P-loop_NTPase"/>
</dbReference>
<dbReference type="InterPro" id="IPR003395">
    <property type="entry name" value="RecF/RecN/SMC_N"/>
</dbReference>
<dbReference type="InterPro" id="IPR042174">
    <property type="entry name" value="RecF_2"/>
</dbReference>
<dbReference type="NCBIfam" id="TIGR00611">
    <property type="entry name" value="recf"/>
    <property type="match status" value="1"/>
</dbReference>
<dbReference type="PANTHER" id="PTHR32182">
    <property type="entry name" value="DNA REPLICATION AND REPAIR PROTEIN RECF"/>
    <property type="match status" value="1"/>
</dbReference>
<dbReference type="PANTHER" id="PTHR32182:SF0">
    <property type="entry name" value="DNA REPLICATION AND REPAIR PROTEIN RECF"/>
    <property type="match status" value="1"/>
</dbReference>
<dbReference type="Pfam" id="PF02463">
    <property type="entry name" value="SMC_N"/>
    <property type="match status" value="1"/>
</dbReference>
<dbReference type="SUPFAM" id="SSF52540">
    <property type="entry name" value="P-loop containing nucleoside triphosphate hydrolases"/>
    <property type="match status" value="1"/>
</dbReference>
<dbReference type="PROSITE" id="PS00617">
    <property type="entry name" value="RECF_1"/>
    <property type="match status" value="1"/>
</dbReference>
<dbReference type="PROSITE" id="PS00618">
    <property type="entry name" value="RECF_2"/>
    <property type="match status" value="1"/>
</dbReference>
<feature type="chain" id="PRO_1000121164" description="DNA replication and repair protein RecF">
    <location>
        <begin position="1"/>
        <end position="368"/>
    </location>
</feature>
<feature type="binding site" evidence="1">
    <location>
        <begin position="30"/>
        <end position="37"/>
    </location>
    <ligand>
        <name>ATP</name>
        <dbReference type="ChEBI" id="CHEBI:30616"/>
    </ligand>
</feature>